<keyword id="KW-0012">Acyltransferase</keyword>
<keyword id="KW-0119">Carbohydrate metabolism</keyword>
<keyword id="KW-0963">Cytoplasm</keyword>
<keyword id="KW-0313">Glucose metabolism</keyword>
<keyword id="KW-0556">Organic radical</keyword>
<keyword id="KW-1185">Reference proteome</keyword>
<keyword id="KW-0808">Transferase</keyword>
<proteinExistence type="inferred from homology"/>
<dbReference type="EC" id="2.3.1.54" evidence="2"/>
<dbReference type="EMBL" id="L42023">
    <property type="protein sequence ID" value="AAC21849.1"/>
    <property type="status" value="ALT_INIT"/>
    <property type="molecule type" value="Genomic_DNA"/>
</dbReference>
<dbReference type="PIR" id="F64052">
    <property type="entry name" value="F64052"/>
</dbReference>
<dbReference type="RefSeq" id="NP_438348.1">
    <property type="nucleotide sequence ID" value="NC_000907.1"/>
</dbReference>
<dbReference type="SMR" id="P43753"/>
<dbReference type="STRING" id="71421.HI_0180"/>
<dbReference type="EnsemblBacteria" id="AAC21849">
    <property type="protein sequence ID" value="AAC21849"/>
    <property type="gene ID" value="HI_0180"/>
</dbReference>
<dbReference type="KEGG" id="hin:HI_0180"/>
<dbReference type="PATRIC" id="fig|71421.8.peg.184"/>
<dbReference type="eggNOG" id="COG1882">
    <property type="taxonomic scope" value="Bacteria"/>
</dbReference>
<dbReference type="HOGENOM" id="CLU_023898_0_0_6"/>
<dbReference type="OrthoDB" id="9803969at2"/>
<dbReference type="UniPathway" id="UPA00920">
    <property type="reaction ID" value="UER00891"/>
</dbReference>
<dbReference type="Proteomes" id="UP000000579">
    <property type="component" value="Chromosome"/>
</dbReference>
<dbReference type="GO" id="GO:0005829">
    <property type="term" value="C:cytosol"/>
    <property type="evidence" value="ECO:0000318"/>
    <property type="project" value="GO_Central"/>
</dbReference>
<dbReference type="GO" id="GO:0008861">
    <property type="term" value="F:formate C-acetyltransferase activity"/>
    <property type="evidence" value="ECO:0000318"/>
    <property type="project" value="GO_Central"/>
</dbReference>
<dbReference type="GO" id="GO:0006006">
    <property type="term" value="P:glucose metabolic process"/>
    <property type="evidence" value="ECO:0007669"/>
    <property type="project" value="UniProtKB-KW"/>
</dbReference>
<dbReference type="CDD" id="cd01678">
    <property type="entry name" value="PFL1"/>
    <property type="match status" value="1"/>
</dbReference>
<dbReference type="FunFam" id="3.20.70.20:FF:000003">
    <property type="entry name" value="Formate acetyltransferase"/>
    <property type="match status" value="1"/>
</dbReference>
<dbReference type="Gene3D" id="3.20.70.20">
    <property type="match status" value="1"/>
</dbReference>
<dbReference type="InterPro" id="IPR050244">
    <property type="entry name" value="Auton_GlycylRad_Cofactor"/>
</dbReference>
<dbReference type="InterPro" id="IPR005949">
    <property type="entry name" value="Form_AcTrfase"/>
</dbReference>
<dbReference type="InterPro" id="IPR019777">
    <property type="entry name" value="Form_AcTrfase_GR_CS"/>
</dbReference>
<dbReference type="InterPro" id="IPR001150">
    <property type="entry name" value="Gly_radical"/>
</dbReference>
<dbReference type="InterPro" id="IPR004184">
    <property type="entry name" value="PFL_dom"/>
</dbReference>
<dbReference type="NCBIfam" id="TIGR01255">
    <property type="entry name" value="pyr_form_ly_1"/>
    <property type="match status" value="1"/>
</dbReference>
<dbReference type="PANTHER" id="PTHR30191">
    <property type="entry name" value="FORMATE ACETYLTRANSFERASE"/>
    <property type="match status" value="1"/>
</dbReference>
<dbReference type="PANTHER" id="PTHR30191:SF0">
    <property type="entry name" value="FORMATE ACETYLTRANSFERASE 1"/>
    <property type="match status" value="1"/>
</dbReference>
<dbReference type="Pfam" id="PF01228">
    <property type="entry name" value="Gly_radical"/>
    <property type="match status" value="1"/>
</dbReference>
<dbReference type="Pfam" id="PF02901">
    <property type="entry name" value="PFL-like"/>
    <property type="match status" value="1"/>
</dbReference>
<dbReference type="PIRSF" id="PIRSF000379">
    <property type="entry name" value="For_Ac_trans_1"/>
    <property type="match status" value="1"/>
</dbReference>
<dbReference type="SUPFAM" id="SSF51998">
    <property type="entry name" value="PFL-like glycyl radical enzymes"/>
    <property type="match status" value="1"/>
</dbReference>
<dbReference type="PROSITE" id="PS00850">
    <property type="entry name" value="GLY_RADICAL_1"/>
    <property type="match status" value="1"/>
</dbReference>
<dbReference type="PROSITE" id="PS51149">
    <property type="entry name" value="GLY_RADICAL_2"/>
    <property type="match status" value="1"/>
</dbReference>
<dbReference type="PROSITE" id="PS51554">
    <property type="entry name" value="PFL"/>
    <property type="match status" value="1"/>
</dbReference>
<feature type="initiator methionine" description="Removed" evidence="1">
    <location>
        <position position="1"/>
    </location>
</feature>
<feature type="chain" id="PRO_0000166688" description="Formate acetyltransferase">
    <location>
        <begin position="2"/>
        <end position="770"/>
    </location>
</feature>
<feature type="domain" description="PFL" evidence="4">
    <location>
        <begin position="5"/>
        <end position="635"/>
    </location>
</feature>
<feature type="domain" description="Glycine radical" evidence="3">
    <location>
        <begin position="642"/>
        <end position="770"/>
    </location>
</feature>
<feature type="active site" description="S-acetylcysteine intermediate" evidence="2">
    <location>
        <position position="419"/>
    </location>
</feature>
<feature type="active site" description="Cysteine radical intermediate" evidence="2">
    <location>
        <position position="420"/>
    </location>
</feature>
<feature type="modified residue" description="Glycine radical" evidence="3">
    <location>
        <position position="745"/>
    </location>
</feature>
<evidence type="ECO:0000250" key="1"/>
<evidence type="ECO:0000250" key="2">
    <source>
        <dbReference type="UniProtKB" id="P09373"/>
    </source>
</evidence>
<evidence type="ECO:0000255" key="3">
    <source>
        <dbReference type="PROSITE-ProRule" id="PRU00493"/>
    </source>
</evidence>
<evidence type="ECO:0000255" key="4">
    <source>
        <dbReference type="PROSITE-ProRule" id="PRU00887"/>
    </source>
</evidence>
<evidence type="ECO:0000305" key="5"/>
<sequence>MSELNEMQKLAWAGFAGGDWQENVNVRDFIQKNYTPYEGDDSFLAGPTEATTKLWESVMEGIKIENRTHAPLDFDEHTPSTIISHAPGYINKDLEKIVGLQTDEPLKRAIMPFGGIKMVEGSCKVYGRELDPKVKKIFTEYRKTHNQGVFDVYTPDILRCRKSGVLTGLPDAYGRGRIIGDYRRVALYGVDFLMKDKYAQFSSLQKDLEDGVNLEATIRLREEIAEQHRALGQLKQMAASYGYDISNPATNAQEAIQWMYFAYLAAIKSQNGAAMSFGRTATFIDVYIERDLKAGKITETEAQELVDHLVMKLRMVRFLRTPEYDQLFSGDPMWATETIAGMGLDGRTLVTKNTFRILHTLYNMGTSPEPNLTILWSEQLPENFKRFCAKVSIDTSSVQYENDDLMRPDFNNDDYAIACCVSPMIVGKQMQFFGARANLAKTLLYAINGGIDEKLGMQVGPKTAPITDEVLDFDTVMTRMDSFMDWLAKQYVTALNVIHYMHDKYSYEAALMALHDRDVYRTMACGIAGLSVAADSLSAIKYAKVKPVRGDIKDKDGNVVATNVAIDFEIEGEYPQYGNNDNRVDDIACDLVERFMKKIQKLKTYRNAVPTQSVLTITSNVVYGKKTGNTPDGRRAGAPFGPGANPMHGRDQKGAVASLTSVAKLPFAYAKDGISYTFSIVPNALGKDAEAQRRNLAGLMDGYFHHEATVEGGQHLNVNVLNREMLLDAMENPDKYPQLTIRVSGYAVRFNSLTKEQQQDVITRTFTESM</sequence>
<accession>P43753</accession>
<reference key="1">
    <citation type="journal article" date="1995" name="Science">
        <title>Whole-genome random sequencing and assembly of Haemophilus influenzae Rd.</title>
        <authorList>
            <person name="Fleischmann R.D."/>
            <person name="Adams M.D."/>
            <person name="White O."/>
            <person name="Clayton R.A."/>
            <person name="Kirkness E.F."/>
            <person name="Kerlavage A.R."/>
            <person name="Bult C.J."/>
            <person name="Tomb J.-F."/>
            <person name="Dougherty B.A."/>
            <person name="Merrick J.M."/>
            <person name="McKenney K."/>
            <person name="Sutton G.G."/>
            <person name="FitzHugh W."/>
            <person name="Fields C.A."/>
            <person name="Gocayne J.D."/>
            <person name="Scott J.D."/>
            <person name="Shirley R."/>
            <person name="Liu L.-I."/>
            <person name="Glodek A."/>
            <person name="Kelley J.M."/>
            <person name="Weidman J.F."/>
            <person name="Phillips C.A."/>
            <person name="Spriggs T."/>
            <person name="Hedblom E."/>
            <person name="Cotton M.D."/>
            <person name="Utterback T.R."/>
            <person name="Hanna M.C."/>
            <person name="Nguyen D.T."/>
            <person name="Saudek D.M."/>
            <person name="Brandon R.C."/>
            <person name="Fine L.D."/>
            <person name="Fritchman J.L."/>
            <person name="Fuhrmann J.L."/>
            <person name="Geoghagen N.S.M."/>
            <person name="Gnehm C.L."/>
            <person name="McDonald L.A."/>
            <person name="Small K.V."/>
            <person name="Fraser C.M."/>
            <person name="Smith H.O."/>
            <person name="Venter J.C."/>
        </authorList>
    </citation>
    <scope>NUCLEOTIDE SEQUENCE [LARGE SCALE GENOMIC DNA]</scope>
    <source>
        <strain>ATCC 51907 / DSM 11121 / KW20 / Rd</strain>
    </source>
</reference>
<comment type="function">
    <text evidence="2">Catalyzes the conversion of pyruvate to formate and acetyl-CoA.</text>
</comment>
<comment type="catalytic activity">
    <reaction evidence="2">
        <text>formate + acetyl-CoA = pyruvate + CoA</text>
        <dbReference type="Rhea" id="RHEA:11844"/>
        <dbReference type="ChEBI" id="CHEBI:15361"/>
        <dbReference type="ChEBI" id="CHEBI:15740"/>
        <dbReference type="ChEBI" id="CHEBI:57287"/>
        <dbReference type="ChEBI" id="CHEBI:57288"/>
        <dbReference type="EC" id="2.3.1.54"/>
    </reaction>
</comment>
<comment type="pathway">
    <text>Fermentation; pyruvate fermentation; formate from pyruvate: step 1/1.</text>
</comment>
<comment type="subunit">
    <text evidence="2">Homodimer.</text>
</comment>
<comment type="subcellular location">
    <subcellularLocation>
        <location evidence="2">Cytoplasm</location>
    </subcellularLocation>
</comment>
<comment type="miscellaneous">
    <text evidence="2">Several mechanisms have been proposed based on complexes formed with substrate analogs. After activation by the glycine radical, the cysteine radical, Cys-420, can abstract hydrogen atoms from the other active site cysteine, Cys-419, and from coenzyme A, and it can also transfer hydrogen atoms to product radicals. The other active site cysteine can attack the central carbonyl of pyruvate and covalently bind the product acetyl group.</text>
</comment>
<comment type="similarity">
    <text evidence="5">Belongs to the glycyl radical enzyme (GRE) family. PFL subfamily.</text>
</comment>
<comment type="sequence caution" evidence="5">
    <conflict type="erroneous initiation">
        <sequence resource="EMBL-CDS" id="AAC21849"/>
    </conflict>
</comment>
<name>PFLB_HAEIN</name>
<gene>
    <name type="primary">pflB</name>
    <name type="synonym">pfl</name>
    <name type="ordered locus">HI_0180</name>
</gene>
<protein>
    <recommendedName>
        <fullName>Formate acetyltransferase</fullName>
        <ecNumber evidence="2">2.3.1.54</ecNumber>
    </recommendedName>
    <alternativeName>
        <fullName>Pyruvate formate-lyase</fullName>
    </alternativeName>
</protein>
<organism>
    <name type="scientific">Haemophilus influenzae (strain ATCC 51907 / DSM 11121 / KW20 / Rd)</name>
    <dbReference type="NCBI Taxonomy" id="71421"/>
    <lineage>
        <taxon>Bacteria</taxon>
        <taxon>Pseudomonadati</taxon>
        <taxon>Pseudomonadota</taxon>
        <taxon>Gammaproteobacteria</taxon>
        <taxon>Pasteurellales</taxon>
        <taxon>Pasteurellaceae</taxon>
        <taxon>Haemophilus</taxon>
    </lineage>
</organism>